<name>GPMB_KLEP7</name>
<reference key="1">
    <citation type="submission" date="2006-09" db="EMBL/GenBank/DDBJ databases">
        <authorList>
            <consortium name="The Klebsiella pneumonia Genome Sequencing Project"/>
            <person name="McClelland M."/>
            <person name="Sanderson E.K."/>
            <person name="Spieth J."/>
            <person name="Clifton W.S."/>
            <person name="Latreille P."/>
            <person name="Sabo A."/>
            <person name="Pepin K."/>
            <person name="Bhonagiri V."/>
            <person name="Porwollik S."/>
            <person name="Ali J."/>
            <person name="Wilson R.K."/>
        </authorList>
    </citation>
    <scope>NUCLEOTIDE SEQUENCE [LARGE SCALE GENOMIC DNA]</scope>
    <source>
        <strain>ATCC 700721 / MGH 78578</strain>
    </source>
</reference>
<feature type="chain" id="PRO_1000064127" description="Probable phosphoglycerate mutase GpmB">
    <location>
        <begin position="1"/>
        <end position="215"/>
    </location>
</feature>
<feature type="active site" description="Tele-phosphohistidine intermediate" evidence="1">
    <location>
        <position position="9"/>
    </location>
</feature>
<feature type="active site" description="Proton donor/acceptor" evidence="1">
    <location>
        <position position="82"/>
    </location>
</feature>
<feature type="binding site" evidence="1">
    <location>
        <begin position="8"/>
        <end position="15"/>
    </location>
    <ligand>
        <name>substrate</name>
    </ligand>
</feature>
<feature type="binding site" evidence="1">
    <location>
        <begin position="21"/>
        <end position="22"/>
    </location>
    <ligand>
        <name>substrate</name>
    </ligand>
</feature>
<feature type="binding site" evidence="1">
    <location>
        <position position="58"/>
    </location>
    <ligand>
        <name>substrate</name>
    </ligand>
</feature>
<feature type="binding site" evidence="1">
    <location>
        <position position="60"/>
    </location>
    <ligand>
        <name>substrate</name>
    </ligand>
</feature>
<feature type="binding site" evidence="1">
    <location>
        <begin position="82"/>
        <end position="85"/>
    </location>
    <ligand>
        <name>substrate</name>
    </ligand>
</feature>
<feature type="binding site" evidence="1">
    <location>
        <begin position="104"/>
        <end position="105"/>
    </location>
    <ligand>
        <name>substrate</name>
    </ligand>
</feature>
<feature type="binding site" evidence="1">
    <location>
        <begin position="151"/>
        <end position="152"/>
    </location>
    <ligand>
        <name>substrate</name>
    </ligand>
</feature>
<feature type="site" description="Transition state stabilizer" evidence="1">
    <location>
        <position position="150"/>
    </location>
</feature>
<protein>
    <recommendedName>
        <fullName evidence="1">Probable phosphoglycerate mutase GpmB</fullName>
        <ecNumber evidence="1">5.4.2.-</ecNumber>
    </recommendedName>
    <alternativeName>
        <fullName evidence="1">PGAM</fullName>
    </alternativeName>
    <alternativeName>
        <fullName evidence="1">Phosphoglyceromutase</fullName>
    </alternativeName>
</protein>
<sequence>MLQVYLVRHGETQWNAERRIQGQSDSPLTAHGERQAWQVGERARTLGITHIITSDLGRTRRTAEIIAEACGCSVIADARLRELDMGVLEKRHIDSLSEEEEGWRRQLVNGTPDGRIPQGESMQELSERMHAALASCLELPAGSRPLLVSHGIALGCLVSTILGLPAYAERRLRLRNCSISRVDYQQSPWLASGWVVETAGDVSHLDAPAMDELQR</sequence>
<keyword id="KW-0324">Glycolysis</keyword>
<keyword id="KW-0413">Isomerase</keyword>
<evidence type="ECO:0000255" key="1">
    <source>
        <dbReference type="HAMAP-Rule" id="MF_01040"/>
    </source>
</evidence>
<comment type="catalytic activity">
    <reaction evidence="1">
        <text>(2R)-2-phosphoglycerate = (2R)-3-phosphoglycerate</text>
        <dbReference type="Rhea" id="RHEA:15901"/>
        <dbReference type="ChEBI" id="CHEBI:58272"/>
        <dbReference type="ChEBI" id="CHEBI:58289"/>
    </reaction>
</comment>
<comment type="pathway">
    <text evidence="1">Carbohydrate degradation; glycolysis; pyruvate from D-glyceraldehyde 3-phosphate: step 3/5.</text>
</comment>
<comment type="similarity">
    <text evidence="1">Belongs to the phosphoglycerate mutase family. GpmB subfamily.</text>
</comment>
<gene>
    <name evidence="1" type="primary">gpmB</name>
    <name type="ordered locus">KPN78578_47690</name>
    <name type="ORF">KPN_04850</name>
</gene>
<organism>
    <name type="scientific">Klebsiella pneumoniae subsp. pneumoniae (strain ATCC 700721 / MGH 78578)</name>
    <dbReference type="NCBI Taxonomy" id="272620"/>
    <lineage>
        <taxon>Bacteria</taxon>
        <taxon>Pseudomonadati</taxon>
        <taxon>Pseudomonadota</taxon>
        <taxon>Gammaproteobacteria</taxon>
        <taxon>Enterobacterales</taxon>
        <taxon>Enterobacteriaceae</taxon>
        <taxon>Klebsiella/Raoultella group</taxon>
        <taxon>Klebsiella</taxon>
        <taxon>Klebsiella pneumoniae complex</taxon>
    </lineage>
</organism>
<proteinExistence type="inferred from homology"/>
<dbReference type="EC" id="5.4.2.-" evidence="1"/>
<dbReference type="EMBL" id="CP000647">
    <property type="protein sequence ID" value="ABR80193.1"/>
    <property type="molecule type" value="Genomic_DNA"/>
</dbReference>
<dbReference type="RefSeq" id="WP_002887811.1">
    <property type="nucleotide sequence ID" value="NC_009648.1"/>
</dbReference>
<dbReference type="SMR" id="A6TI09"/>
<dbReference type="STRING" id="272620.KPN_04850"/>
<dbReference type="jPOST" id="A6TI09"/>
<dbReference type="PaxDb" id="272620-KPN_04850"/>
<dbReference type="EnsemblBacteria" id="ABR80193">
    <property type="protein sequence ID" value="ABR80193"/>
    <property type="gene ID" value="KPN_04850"/>
</dbReference>
<dbReference type="KEGG" id="kpn:KPN_04850"/>
<dbReference type="HOGENOM" id="CLU_033323_9_5_6"/>
<dbReference type="UniPathway" id="UPA00109">
    <property type="reaction ID" value="UER00186"/>
</dbReference>
<dbReference type="Proteomes" id="UP000000265">
    <property type="component" value="Chromosome"/>
</dbReference>
<dbReference type="GO" id="GO:0005737">
    <property type="term" value="C:cytoplasm"/>
    <property type="evidence" value="ECO:0007669"/>
    <property type="project" value="TreeGrafter"/>
</dbReference>
<dbReference type="GO" id="GO:0016791">
    <property type="term" value="F:phosphatase activity"/>
    <property type="evidence" value="ECO:0007669"/>
    <property type="project" value="TreeGrafter"/>
</dbReference>
<dbReference type="GO" id="GO:0004619">
    <property type="term" value="F:phosphoglycerate mutase activity"/>
    <property type="evidence" value="ECO:0007669"/>
    <property type="project" value="UniProtKB-UniRule"/>
</dbReference>
<dbReference type="GO" id="GO:0006096">
    <property type="term" value="P:glycolytic process"/>
    <property type="evidence" value="ECO:0007669"/>
    <property type="project" value="UniProtKB-UniRule"/>
</dbReference>
<dbReference type="CDD" id="cd07067">
    <property type="entry name" value="HP_PGM_like"/>
    <property type="match status" value="1"/>
</dbReference>
<dbReference type="Gene3D" id="3.40.50.1240">
    <property type="entry name" value="Phosphoglycerate mutase-like"/>
    <property type="match status" value="1"/>
</dbReference>
<dbReference type="HAMAP" id="MF_01040">
    <property type="entry name" value="PGAM_GpmB"/>
    <property type="match status" value="1"/>
</dbReference>
<dbReference type="InterPro" id="IPR013078">
    <property type="entry name" value="His_Pase_superF_clade-1"/>
</dbReference>
<dbReference type="InterPro" id="IPR029033">
    <property type="entry name" value="His_PPase_superfam"/>
</dbReference>
<dbReference type="InterPro" id="IPR001345">
    <property type="entry name" value="PG/BPGM_mutase_AS"/>
</dbReference>
<dbReference type="InterPro" id="IPR050275">
    <property type="entry name" value="PGM_Phosphatase"/>
</dbReference>
<dbReference type="InterPro" id="IPR023086">
    <property type="entry name" value="Phosphoglycerate_mutase_GpmB"/>
</dbReference>
<dbReference type="NCBIfam" id="NF002901">
    <property type="entry name" value="PRK03482.1"/>
    <property type="match status" value="1"/>
</dbReference>
<dbReference type="PANTHER" id="PTHR48100">
    <property type="entry name" value="BROAD-SPECIFICITY PHOSPHATASE YOR283W-RELATED"/>
    <property type="match status" value="1"/>
</dbReference>
<dbReference type="PANTHER" id="PTHR48100:SF1">
    <property type="entry name" value="HISTIDINE PHOSPHATASE FAMILY PROTEIN-RELATED"/>
    <property type="match status" value="1"/>
</dbReference>
<dbReference type="Pfam" id="PF00300">
    <property type="entry name" value="His_Phos_1"/>
    <property type="match status" value="1"/>
</dbReference>
<dbReference type="SMART" id="SM00855">
    <property type="entry name" value="PGAM"/>
    <property type="match status" value="1"/>
</dbReference>
<dbReference type="SUPFAM" id="SSF53254">
    <property type="entry name" value="Phosphoglycerate mutase-like"/>
    <property type="match status" value="1"/>
</dbReference>
<dbReference type="PROSITE" id="PS00175">
    <property type="entry name" value="PG_MUTASE"/>
    <property type="match status" value="1"/>
</dbReference>
<accession>A6TI09</accession>